<sequence>MLALKISVYTVVFFFVGIFLFGFLASDPTRTPNRKDLESPQD</sequence>
<reference key="1">
    <citation type="journal article" date="2007" name="PLoS Genet.">
        <title>Patterns and implications of gene gain and loss in the evolution of Prochlorococcus.</title>
        <authorList>
            <person name="Kettler G.C."/>
            <person name="Martiny A.C."/>
            <person name="Huang K."/>
            <person name="Zucker J."/>
            <person name="Coleman M.L."/>
            <person name="Rodrigue S."/>
            <person name="Chen F."/>
            <person name="Lapidus A."/>
            <person name="Ferriera S."/>
            <person name="Johnson J."/>
            <person name="Steglich C."/>
            <person name="Church G.M."/>
            <person name="Richardson P."/>
            <person name="Chisholm S.W."/>
        </authorList>
    </citation>
    <scope>NUCLEOTIDE SEQUENCE [LARGE SCALE GENOMIC DNA]</scope>
    <source>
        <strain>NATL1A</strain>
    </source>
</reference>
<name>PSBI_PROM1</name>
<comment type="function">
    <text evidence="1">One of the components of the core complex of photosystem II (PSII), required for its stability and/or assembly. PSII is a light-driven water:plastoquinone oxidoreductase that uses light energy to abstract electrons from H(2)O, generating O(2) and a proton gradient subsequently used for ATP formation. It consists of a core antenna complex that captures photons, and an electron transfer chain that converts photonic excitation into a charge separation.</text>
</comment>
<comment type="subunit">
    <text evidence="2">PSII is composed of 1 copy each of membrane proteins PsbA, PsbB, PsbC, PsbD, PsbE, PsbF, PsbH, PsbI, PsbJ, PsbK, PsbL, PsbM, PsbT, PsbX, PsbY, Psb30/Ycf12, peripheral proteins PsbO, CyanoQ (PsbQ), PsbU, PsbV and a large number of cofactors. It forms dimeric complexes.</text>
</comment>
<comment type="subcellular location">
    <subcellularLocation>
        <location evidence="1">Cellular thylakoid membrane</location>
        <topology evidence="1">Single-pass membrane protein</topology>
    </subcellularLocation>
</comment>
<comment type="similarity">
    <text evidence="1">Belongs to the PsbI family.</text>
</comment>
<dbReference type="EMBL" id="CP000553">
    <property type="protein sequence ID" value="ABM74895.1"/>
    <property type="molecule type" value="Genomic_DNA"/>
</dbReference>
<dbReference type="RefSeq" id="WP_011294252.1">
    <property type="nucleotide sequence ID" value="NC_008819.1"/>
</dbReference>
<dbReference type="SMR" id="A2C085"/>
<dbReference type="KEGG" id="pme:NATL1_03311"/>
<dbReference type="HOGENOM" id="CLU_212150_0_0_3"/>
<dbReference type="Proteomes" id="UP000002592">
    <property type="component" value="Chromosome"/>
</dbReference>
<dbReference type="GO" id="GO:0009539">
    <property type="term" value="C:photosystem II reaction center"/>
    <property type="evidence" value="ECO:0007669"/>
    <property type="project" value="InterPro"/>
</dbReference>
<dbReference type="GO" id="GO:0031676">
    <property type="term" value="C:plasma membrane-derived thylakoid membrane"/>
    <property type="evidence" value="ECO:0007669"/>
    <property type="project" value="UniProtKB-SubCell"/>
</dbReference>
<dbReference type="GO" id="GO:0015979">
    <property type="term" value="P:photosynthesis"/>
    <property type="evidence" value="ECO:0007669"/>
    <property type="project" value="UniProtKB-UniRule"/>
</dbReference>
<dbReference type="HAMAP" id="MF_01316">
    <property type="entry name" value="PSII_PsbI"/>
    <property type="match status" value="1"/>
</dbReference>
<dbReference type="InterPro" id="IPR003686">
    <property type="entry name" value="PSII_PsbI"/>
</dbReference>
<dbReference type="InterPro" id="IPR037271">
    <property type="entry name" value="PSII_PsbI_sf"/>
</dbReference>
<dbReference type="NCBIfam" id="NF002735">
    <property type="entry name" value="PRK02655.1"/>
    <property type="match status" value="1"/>
</dbReference>
<dbReference type="PANTHER" id="PTHR35772">
    <property type="entry name" value="PHOTOSYSTEM II REACTION CENTER PROTEIN I"/>
    <property type="match status" value="1"/>
</dbReference>
<dbReference type="PANTHER" id="PTHR35772:SF1">
    <property type="entry name" value="PHOTOSYSTEM II REACTION CENTER PROTEIN I"/>
    <property type="match status" value="1"/>
</dbReference>
<dbReference type="Pfam" id="PF02532">
    <property type="entry name" value="PsbI"/>
    <property type="match status" value="1"/>
</dbReference>
<dbReference type="SUPFAM" id="SSF161041">
    <property type="entry name" value="Photosystem II reaction center protein I, PsbI"/>
    <property type="match status" value="1"/>
</dbReference>
<feature type="chain" id="PRO_0000298300" description="Photosystem II reaction center protein I">
    <location>
        <begin position="1"/>
        <end position="42"/>
    </location>
</feature>
<feature type="transmembrane region" description="Helical" evidence="1">
    <location>
        <begin position="6"/>
        <end position="26"/>
    </location>
</feature>
<evidence type="ECO:0000255" key="1">
    <source>
        <dbReference type="HAMAP-Rule" id="MF_01316"/>
    </source>
</evidence>
<evidence type="ECO:0000305" key="2"/>
<keyword id="KW-0472">Membrane</keyword>
<keyword id="KW-0602">Photosynthesis</keyword>
<keyword id="KW-0604">Photosystem II</keyword>
<keyword id="KW-0674">Reaction center</keyword>
<keyword id="KW-0793">Thylakoid</keyword>
<keyword id="KW-0812">Transmembrane</keyword>
<keyword id="KW-1133">Transmembrane helix</keyword>
<organism>
    <name type="scientific">Prochlorococcus marinus (strain NATL1A)</name>
    <dbReference type="NCBI Taxonomy" id="167555"/>
    <lineage>
        <taxon>Bacteria</taxon>
        <taxon>Bacillati</taxon>
        <taxon>Cyanobacteriota</taxon>
        <taxon>Cyanophyceae</taxon>
        <taxon>Synechococcales</taxon>
        <taxon>Prochlorococcaceae</taxon>
        <taxon>Prochlorococcus</taxon>
    </lineage>
</organism>
<gene>
    <name evidence="1" type="primary">psbI</name>
    <name type="ordered locus">NATL1_03311</name>
</gene>
<proteinExistence type="inferred from homology"/>
<accession>A2C085</accession>
<protein>
    <recommendedName>
        <fullName evidence="1">Photosystem II reaction center protein I</fullName>
        <shortName evidence="1">PSII-I</shortName>
    </recommendedName>
    <alternativeName>
        <fullName evidence="1">PSII 4.4 kDa protein</fullName>
    </alternativeName>
</protein>